<gene>
    <name evidence="8" type="primary">csm1</name>
</gene>
<keyword id="KW-0009">Actin-binding</keyword>
<keyword id="KW-0067">ATP-binding</keyword>
<keyword id="KW-1003">Cell membrane</keyword>
<keyword id="KW-0325">Glycoprotein</keyword>
<keyword id="KW-0328">Glycosyltransferase</keyword>
<keyword id="KW-0472">Membrane</keyword>
<keyword id="KW-0505">Motor protein</keyword>
<keyword id="KW-0518">Myosin</keyword>
<keyword id="KW-0547">Nucleotide-binding</keyword>
<keyword id="KW-1185">Reference proteome</keyword>
<keyword id="KW-0808">Transferase</keyword>
<keyword id="KW-0812">Transmembrane</keyword>
<keyword id="KW-1133">Transmembrane helix</keyword>
<reference key="1">
    <citation type="journal article" date="1999" name="FEMS Microbiol. Lett.">
        <title>Isolation of csm1 encoding a class V chitin synthase with a myosin motor-like domain from the rice blast fungus, Pyricularia oryzae.</title>
        <authorList>
            <person name="Park I.C."/>
            <person name="Horiuchi H."/>
            <person name="Hwang C.W."/>
            <person name="Yeh W.H."/>
            <person name="Ohta A."/>
            <person name="Ryu J.C."/>
            <person name="Takagi M."/>
        </authorList>
    </citation>
    <scope>NUCLEOTIDE SEQUENCE [GENOMIC DNA]</scope>
    <scope>FUNCTION</scope>
    <scope>INDUCTION</scope>
    <source>
        <strain>KI-197</strain>
    </source>
</reference>
<accession>O93809</accession>
<evidence type="ECO:0000250" key="1">
    <source>
        <dbReference type="UniProtKB" id="G5EB74"/>
    </source>
</evidence>
<evidence type="ECO:0000255" key="2"/>
<evidence type="ECO:0000255" key="3">
    <source>
        <dbReference type="PROSITE-ProRule" id="PRU00498"/>
    </source>
</evidence>
<evidence type="ECO:0000255" key="4">
    <source>
        <dbReference type="PROSITE-ProRule" id="PRU00782"/>
    </source>
</evidence>
<evidence type="ECO:0000255" key="5">
    <source>
        <dbReference type="PROSITE-ProRule" id="PRU01342"/>
    </source>
</evidence>
<evidence type="ECO:0000256" key="6">
    <source>
        <dbReference type="SAM" id="MobiDB-lite"/>
    </source>
</evidence>
<evidence type="ECO:0000269" key="7">
    <source>
    </source>
</evidence>
<evidence type="ECO:0000303" key="8">
    <source>
    </source>
</evidence>
<evidence type="ECO:0000305" key="9"/>
<evidence type="ECO:0000305" key="10">
    <source>
    </source>
</evidence>
<dbReference type="EC" id="2.4.1.16" evidence="10"/>
<dbReference type="EMBL" id="AB018251">
    <property type="protein sequence ID" value="BAA74449.1"/>
    <property type="molecule type" value="Genomic_DNA"/>
</dbReference>
<dbReference type="PIR" id="A59290">
    <property type="entry name" value="A59290"/>
</dbReference>
<dbReference type="SMR" id="O93809"/>
<dbReference type="CAZy" id="GT2">
    <property type="family name" value="Glycosyltransferase Family 2"/>
</dbReference>
<dbReference type="Proteomes" id="UP000515153">
    <property type="component" value="Unplaced"/>
</dbReference>
<dbReference type="GO" id="GO:0030428">
    <property type="term" value="C:cell septum"/>
    <property type="evidence" value="ECO:0007669"/>
    <property type="project" value="UniProtKB-SubCell"/>
</dbReference>
<dbReference type="GO" id="GO:0051286">
    <property type="term" value="C:cell tip"/>
    <property type="evidence" value="ECO:0007669"/>
    <property type="project" value="UniProtKB-SubCell"/>
</dbReference>
<dbReference type="GO" id="GO:0016459">
    <property type="term" value="C:myosin complex"/>
    <property type="evidence" value="ECO:0007669"/>
    <property type="project" value="UniProtKB-KW"/>
</dbReference>
<dbReference type="GO" id="GO:0005886">
    <property type="term" value="C:plasma membrane"/>
    <property type="evidence" value="ECO:0007669"/>
    <property type="project" value="UniProtKB-SubCell"/>
</dbReference>
<dbReference type="GO" id="GO:0003779">
    <property type="term" value="F:actin binding"/>
    <property type="evidence" value="ECO:0007669"/>
    <property type="project" value="UniProtKB-KW"/>
</dbReference>
<dbReference type="GO" id="GO:0005524">
    <property type="term" value="F:ATP binding"/>
    <property type="evidence" value="ECO:0007669"/>
    <property type="project" value="UniProtKB-KW"/>
</dbReference>
<dbReference type="GO" id="GO:0004100">
    <property type="term" value="F:chitin synthase activity"/>
    <property type="evidence" value="ECO:0007669"/>
    <property type="project" value="UniProtKB-EC"/>
</dbReference>
<dbReference type="GO" id="GO:0003774">
    <property type="term" value="F:cytoskeletal motor activity"/>
    <property type="evidence" value="ECO:0007669"/>
    <property type="project" value="InterPro"/>
</dbReference>
<dbReference type="GO" id="GO:0006031">
    <property type="term" value="P:chitin biosynthetic process"/>
    <property type="evidence" value="ECO:0007669"/>
    <property type="project" value="TreeGrafter"/>
</dbReference>
<dbReference type="GO" id="GO:0031505">
    <property type="term" value="P:fungal-type cell wall organization"/>
    <property type="evidence" value="ECO:0007669"/>
    <property type="project" value="TreeGrafter"/>
</dbReference>
<dbReference type="CDD" id="cd14879">
    <property type="entry name" value="MYSc_Myo17"/>
    <property type="match status" value="1"/>
</dbReference>
<dbReference type="FunFam" id="1.10.10.60:FF:000337">
    <property type="entry name" value="Chitin synthase 8"/>
    <property type="match status" value="1"/>
</dbReference>
<dbReference type="FunFam" id="1.10.10.820:FF:000012">
    <property type="entry name" value="Chitin synthase ChsE"/>
    <property type="match status" value="1"/>
</dbReference>
<dbReference type="FunFam" id="1.20.58.530:FF:000017">
    <property type="entry name" value="Chitin synthase ChsE"/>
    <property type="match status" value="1"/>
</dbReference>
<dbReference type="Gene3D" id="1.10.10.820">
    <property type="match status" value="1"/>
</dbReference>
<dbReference type="Gene3D" id="1.20.58.530">
    <property type="match status" value="1"/>
</dbReference>
<dbReference type="Gene3D" id="1.10.10.60">
    <property type="entry name" value="Homeodomain-like"/>
    <property type="match status" value="1"/>
</dbReference>
<dbReference type="Gene3D" id="3.40.850.10">
    <property type="entry name" value="Kinesin motor domain"/>
    <property type="match status" value="1"/>
</dbReference>
<dbReference type="Gene3D" id="1.20.120.720">
    <property type="entry name" value="Myosin VI head, motor domain, U50 subdomain"/>
    <property type="match status" value="1"/>
</dbReference>
<dbReference type="InterPro" id="IPR004835">
    <property type="entry name" value="Chitin_synth"/>
</dbReference>
<dbReference type="InterPro" id="IPR036400">
    <property type="entry name" value="Cyt_B5-like_heme/steroid_sf"/>
</dbReference>
<dbReference type="InterPro" id="IPR014876">
    <property type="entry name" value="DEK_C"/>
</dbReference>
<dbReference type="InterPro" id="IPR036961">
    <property type="entry name" value="Kinesin_motor_dom_sf"/>
</dbReference>
<dbReference type="InterPro" id="IPR001609">
    <property type="entry name" value="Myosin_head_motor_dom-like"/>
</dbReference>
<dbReference type="InterPro" id="IPR036037">
    <property type="entry name" value="MYSc_Myo17"/>
</dbReference>
<dbReference type="InterPro" id="IPR029044">
    <property type="entry name" value="Nucleotide-diphossugar_trans"/>
</dbReference>
<dbReference type="InterPro" id="IPR027417">
    <property type="entry name" value="P-loop_NTPase"/>
</dbReference>
<dbReference type="InterPro" id="IPR025662">
    <property type="entry name" value="Sigma_54_int_dom_ATP-bd_1"/>
</dbReference>
<dbReference type="PANTHER" id="PTHR22914">
    <property type="entry name" value="CHITIN SYNTHASE"/>
    <property type="match status" value="1"/>
</dbReference>
<dbReference type="PANTHER" id="PTHR22914:SF45">
    <property type="entry name" value="CHITIN SYNTHASE"/>
    <property type="match status" value="1"/>
</dbReference>
<dbReference type="Pfam" id="PF03142">
    <property type="entry name" value="Chitin_synth_2"/>
    <property type="match status" value="1"/>
</dbReference>
<dbReference type="Pfam" id="PF08766">
    <property type="entry name" value="DEK_C"/>
    <property type="match status" value="1"/>
</dbReference>
<dbReference type="Pfam" id="PF00063">
    <property type="entry name" value="Myosin_head"/>
    <property type="match status" value="1"/>
</dbReference>
<dbReference type="SMART" id="SM00242">
    <property type="entry name" value="MYSc"/>
    <property type="match status" value="1"/>
</dbReference>
<dbReference type="SUPFAM" id="SSF55856">
    <property type="entry name" value="Cytochrome b5-like heme/steroid binding domain"/>
    <property type="match status" value="1"/>
</dbReference>
<dbReference type="SUPFAM" id="SSF109715">
    <property type="entry name" value="DEK C-terminal domain"/>
    <property type="match status" value="1"/>
</dbReference>
<dbReference type="SUPFAM" id="SSF53448">
    <property type="entry name" value="Nucleotide-diphospho-sugar transferases"/>
    <property type="match status" value="1"/>
</dbReference>
<dbReference type="SUPFAM" id="SSF52540">
    <property type="entry name" value="P-loop containing nucleoside triphosphate hydrolases"/>
    <property type="match status" value="1"/>
</dbReference>
<dbReference type="PROSITE" id="PS51998">
    <property type="entry name" value="DEK_C"/>
    <property type="match status" value="1"/>
</dbReference>
<dbReference type="PROSITE" id="PS51456">
    <property type="entry name" value="MYOSIN_MOTOR"/>
    <property type="match status" value="1"/>
</dbReference>
<dbReference type="PROSITE" id="PS00675">
    <property type="entry name" value="SIGMA54_INTERACT_1"/>
    <property type="match status" value="1"/>
</dbReference>
<feature type="chain" id="PRO_0000460858" description="Chitin synthase csm1">
    <location>
        <begin position="1"/>
        <end position="1869"/>
    </location>
</feature>
<feature type="transmembrane region" description="Helical" evidence="2">
    <location>
        <begin position="880"/>
        <end position="900"/>
    </location>
</feature>
<feature type="transmembrane region" description="Helical" evidence="2">
    <location>
        <begin position="919"/>
        <end position="939"/>
    </location>
</feature>
<feature type="transmembrane region" description="Helical" evidence="2">
    <location>
        <begin position="1191"/>
        <end position="1211"/>
    </location>
</feature>
<feature type="transmembrane region" description="Helical" evidence="2">
    <location>
        <begin position="1579"/>
        <end position="1599"/>
    </location>
</feature>
<feature type="transmembrane region" description="Helical" evidence="2">
    <location>
        <begin position="1612"/>
        <end position="1632"/>
    </location>
</feature>
<feature type="transmembrane region" description="Helical" evidence="2">
    <location>
        <begin position="1639"/>
        <end position="1659"/>
    </location>
</feature>
<feature type="domain" description="Myosin motor" evidence="4">
    <location>
        <begin position="1"/>
        <end position="778"/>
    </location>
</feature>
<feature type="domain" description="DEK-C" evidence="5">
    <location>
        <begin position="1811"/>
        <end position="1866"/>
    </location>
</feature>
<feature type="region of interest" description="Disordered" evidence="6">
    <location>
        <begin position="579"/>
        <end position="653"/>
    </location>
</feature>
<feature type="region of interest" description="Actin-binding" evidence="4">
    <location>
        <begin position="658"/>
        <end position="682"/>
    </location>
</feature>
<feature type="compositionally biased region" description="Polar residues" evidence="6">
    <location>
        <begin position="583"/>
        <end position="593"/>
    </location>
</feature>
<feature type="binding site" evidence="4">
    <location>
        <begin position="103"/>
        <end position="110"/>
    </location>
    <ligand>
        <name>ATP</name>
        <dbReference type="ChEBI" id="CHEBI:30616"/>
    </ligand>
</feature>
<feature type="glycosylation site" description="N-linked (GlcNAc...) asparagine" evidence="3">
    <location>
        <position position="122"/>
    </location>
</feature>
<feature type="glycosylation site" description="N-linked (GlcNAc...) asparagine" evidence="3">
    <location>
        <position position="290"/>
    </location>
</feature>
<feature type="glycosylation site" description="N-linked (GlcNAc...) asparagine" evidence="3">
    <location>
        <position position="427"/>
    </location>
</feature>
<feature type="glycosylation site" description="N-linked (GlcNAc...) asparagine" evidence="3">
    <location>
        <position position="558"/>
    </location>
</feature>
<feature type="glycosylation site" description="N-linked (GlcNAc...) asparagine" evidence="3">
    <location>
        <position position="660"/>
    </location>
</feature>
<feature type="glycosylation site" description="N-linked (GlcNAc...) asparagine" evidence="3">
    <location>
        <position position="1029"/>
    </location>
</feature>
<feature type="glycosylation site" description="N-linked (GlcNAc...) asparagine" evidence="3">
    <location>
        <position position="1054"/>
    </location>
</feature>
<feature type="glycosylation site" description="N-linked (GlcNAc...) asparagine" evidence="3">
    <location>
        <position position="1120"/>
    </location>
</feature>
<feature type="glycosylation site" description="N-linked (GlcNAc...) asparagine" evidence="3">
    <location>
        <position position="1448"/>
    </location>
</feature>
<feature type="glycosylation site" description="N-linked (GlcNAc...) asparagine" evidence="3">
    <location>
        <position position="1554"/>
    </location>
</feature>
<name>CHS5_PYRGI</name>
<organism>
    <name type="scientific">Pyricularia grisea</name>
    <name type="common">Crabgrass-specific blast fungus</name>
    <name type="synonym">Magnaporthe grisea</name>
    <dbReference type="NCBI Taxonomy" id="148305"/>
    <lineage>
        <taxon>Eukaryota</taxon>
        <taxon>Fungi</taxon>
        <taxon>Dikarya</taxon>
        <taxon>Ascomycota</taxon>
        <taxon>Pezizomycotina</taxon>
        <taxon>Sordariomycetes</taxon>
        <taxon>Sordariomycetidae</taxon>
        <taxon>Magnaporthales</taxon>
        <taxon>Pyriculariaceae</taxon>
        <taxon>Pyricularia</taxon>
    </lineage>
</organism>
<protein>
    <recommendedName>
        <fullName evidence="8">Chitin synthase csm1</fullName>
        <ecNumber evidence="10">2.4.1.16</ecNumber>
    </recommendedName>
    <alternativeName>
        <fullName evidence="9">Chitin-UDP acetyl-glucosaminyl transferase csm1</fullName>
    </alternativeName>
    <alternativeName>
        <fullName evidence="8">Class-V chitin synthase csm1</fullName>
    </alternativeName>
</protein>
<proteinExistence type="evidence at transcript level"/>
<comment type="function">
    <text evidence="7 10">Polymerizes chitin, a structural polymer of the cell wall and septum, by transferring the sugar moiety of UDP-GlcNAc to the non-reducing end of the growing chitin polymer (Probable). Involved in mycelial growth (PubMed:9919661).</text>
</comment>
<comment type="catalytic activity">
    <reaction evidence="10">
        <text>[(1-&gt;4)-N-acetyl-beta-D-glucosaminyl](n) + UDP-N-acetyl-alpha-D-glucosamine = [(1-&gt;4)-N-acetyl-beta-D-glucosaminyl](n+1) + UDP + H(+)</text>
        <dbReference type="Rhea" id="RHEA:16637"/>
        <dbReference type="Rhea" id="RHEA-COMP:9593"/>
        <dbReference type="Rhea" id="RHEA-COMP:9595"/>
        <dbReference type="ChEBI" id="CHEBI:15378"/>
        <dbReference type="ChEBI" id="CHEBI:17029"/>
        <dbReference type="ChEBI" id="CHEBI:57705"/>
        <dbReference type="ChEBI" id="CHEBI:58223"/>
        <dbReference type="EC" id="2.4.1.16"/>
    </reaction>
    <physiologicalReaction direction="left-to-right" evidence="10">
        <dbReference type="Rhea" id="RHEA:16638"/>
    </physiologicalReaction>
</comment>
<comment type="subcellular location">
    <subcellularLocation>
        <location evidence="9">Cell membrane</location>
        <topology evidence="2">Multi-pass membrane protein</topology>
    </subcellularLocation>
    <subcellularLocation>
        <location evidence="1">Cell septum</location>
    </subcellularLocation>
    <subcellularLocation>
        <location evidence="1">Cell tip</location>
    </subcellularLocation>
</comment>
<comment type="induction">
    <text evidence="7">Constantly expressed between 2 and 5 days of mycelial growth.</text>
</comment>
<comment type="domain">
    <text evidence="1">The N-terminal myosin motor-like domain (MMD) does not seem to have motor activity but is indispensable for polarized cell wall synthesis via binding to actin that ensures the proper localization to the hyphal tips and septation sites near actin structures.</text>
</comment>
<comment type="similarity">
    <text evidence="9">In the N-terminal section; belongs to the TRAFAC class myosin-kinesin ATPase superfamily. Myosin family.</text>
</comment>
<comment type="similarity">
    <text evidence="9">In the C-terminal section; belongs to the chitin synthase family. Class V subfamily.</text>
</comment>
<sequence>MAQHRCVGGNGGAHTQPSLPALPAHLQSNTHLTGHLASRFHVSLPTAKLSSHAFISINTYTSSSKGQDGGKAGSAQGEAEDMADRAFLRLGHRSENQAILFLGESGSGKTTIRSHILTALLNKTSTPLSTKVSLAAYVFDTLTTTKTATTPTASKAGLFYELQYDTASTTSPLLIGGKLLDHRLERSRITDVPTGERNFHILYYILAGTSAAEKTHLGFGEPDAGTGSKRWRYLGHPTQLKVGINDAQGFQLFKTALRKLEFPRSEIAEICQVLASILHIGQLEFESSENTTVAGDESGGFSHEGGQITTVAKNKDVLAIVAAFLGVSAAELQTTLGYKTKIIHKERVTVMLDPAGARANANELARTLYSLLVAYVIENINQKICAPEEAIVNTVSIIDFPGFSQQSSTGSSLDLLLNNAAAEAMYNLTLQNFFDRKADLLETEEVSVPPTSYFDNSDAVKGLLKTGNGLLSILDDQTRRHRTDMQLLESLRKRFEGKNPAIGVSAATAKLPGSNFLSENTAASFTVRHFAGEVEYSIKGLVEENGEVISGDLLNLVNSTKSDFIARLFGQEALHTVTHPQERTTVMQASVSSKPMRAPSVMSRKIRPGTARTTRQRKESISGRQDTLDDIASERGDSRRPVNKPSEEGASGQFLHSLDNVTKSFHAQNTNAYFVFCLKPNDRRIANQFDSKCVRTQMQTFGIAEISQRIRSADFSVFLPFGEFLGLADVDTLLVGSEREKVEAVVDEKRWPTNEIQIGSTGVFISERCWMEIAQLSDMVTGRFGVPESEGGTPLANMPYGASKERLIAAGNSPYNNDKAKSGYFGSNDIDGRSDAGVSAFGGGDMFKNLDTREQMAERGNEKSMVEVEEFKDSPSRKRWVFITWMLTFFVPEFLIQHLGKMPRKDVRMAWREKLAINFIIWFSCLAAAFILVVFPMLVCPTQYVFTGEETLGLQRKRWKASYAAIRGQVFDIGSFIPSTPCPICHQSALHQYAGTDITGLFPVQVSALCKGTTGSVNPAVLLDYKDTNITDSPNVFNSQDLNSRYHDFRYFTNDTRPDWFSQMMITFRGTYKKGNIGYPAQVVQKMAQQRNAIAILNGRVYDFTKYIAGGAISGSSITNASTDQSLLDFMDPSVVRLFLGPARDDVTPLWDALRLTPTLRKSMQLCLDNLFYLGDVDTRNSVVCNFAKYFILAVTIILCSIIAFKFFAALQFGTKNMPQNLDKFIMCQIPAYTEDEESLRGAIDSAARMRYDDKRKLLIVVCDGMIIGQGNDRPTLRIVLDILGVSETVDPEPLSFESLGEGLKQHNMGKVYSGLYEVQGHIVPFLVVVKVGKPSEVSRPGNRGKRDSQMVIMRFLNRVHYNLPMSPLELEMYHQIRNIIGVNPTFYEYMLQIDADTVVAADSATRFVSAFLDDTRLIACCGETSIANAKSSFITMIQVYEYYISHNLSKAFESLFGSVTCLPGRFSMYRIRAAETGKPLFVSREVVDRYATIRVDTLHMKNLLHLGEDRYLTTLLLKYHNKYKTKYIYRAHAWTIAPDSWKVFLSQRRRWINSTVHNLIELIPMGQLCSFCCFSMRFIVFIDLLSTIIQPFTIAYIVYFIVRMVLTLDLVPVLAFVLLAAVYGLQAIIFILRRKWEMIAWMILYIIAMPIFSFGLPLYAFWHMDDFTWGNTRVVTGEKGKKAVVTDEGKFDPSSIPKKWEEYQSELWDAQTSKDVTRSEASGFSYATKAPVAVSEYGFPGSTPMAHTLPADLGAPRHTTHATHAILASRMSLAHSEMLMAGNRQSQFGGSQFNLPQSGSEMELSNLAGLPSDDALLAEIREILRTADLMTVTKKGVKQELERRFGVNLDSRRAYINSATEALLSGQL</sequence>